<feature type="chain" id="PRO_0000187431" description="Large ribosomal subunit protein bL34">
    <location>
        <begin position="1"/>
        <end position="44"/>
    </location>
</feature>
<name>RL34_ONYPE</name>
<reference key="1">
    <citation type="journal article" date="2004" name="Nat. Genet.">
        <title>Reductive evolution suggested from the complete genome sequence of a plant-pathogenic phytoplasma.</title>
        <authorList>
            <person name="Oshima K."/>
            <person name="Kakizawa S."/>
            <person name="Nishigawa H."/>
            <person name="Jung H.-Y."/>
            <person name="Wei W."/>
            <person name="Suzuki S."/>
            <person name="Arashida R."/>
            <person name="Nakata D."/>
            <person name="Miyata S."/>
            <person name="Ugaki M."/>
            <person name="Namba S."/>
        </authorList>
    </citation>
    <scope>NUCLEOTIDE SEQUENCE [LARGE SCALE GENOMIC DNA]</scope>
    <source>
        <strain>OY-M</strain>
    </source>
</reference>
<accession>Q6YQX6</accession>
<organism>
    <name type="scientific">Onion yellows phytoplasma (strain OY-M)</name>
    <dbReference type="NCBI Taxonomy" id="262768"/>
    <lineage>
        <taxon>Bacteria</taxon>
        <taxon>Bacillati</taxon>
        <taxon>Mycoplasmatota</taxon>
        <taxon>Mollicutes</taxon>
        <taxon>Acholeplasmatales</taxon>
        <taxon>Acholeplasmataceae</taxon>
        <taxon>Candidatus Phytoplasma</taxon>
        <taxon>16SrI (Aster yellows group)</taxon>
    </lineage>
</organism>
<gene>
    <name evidence="1" type="primary">rpmH</name>
    <name type="ordered locus">PAM_247</name>
</gene>
<evidence type="ECO:0000255" key="1">
    <source>
        <dbReference type="HAMAP-Rule" id="MF_00391"/>
    </source>
</evidence>
<evidence type="ECO:0000305" key="2"/>
<dbReference type="EMBL" id="AP006628">
    <property type="protein sequence ID" value="BAD04332.1"/>
    <property type="molecule type" value="Genomic_DNA"/>
</dbReference>
<dbReference type="SMR" id="Q6YQX6"/>
<dbReference type="STRING" id="262768.PAM_247"/>
<dbReference type="KEGG" id="poy:PAM_247"/>
<dbReference type="eggNOG" id="COG0230">
    <property type="taxonomic scope" value="Bacteria"/>
</dbReference>
<dbReference type="HOGENOM" id="CLU_129938_2_0_14"/>
<dbReference type="BioCyc" id="OYEL262768:G1G26-298-MONOMER"/>
<dbReference type="Proteomes" id="UP000002523">
    <property type="component" value="Chromosome"/>
</dbReference>
<dbReference type="GO" id="GO:1990904">
    <property type="term" value="C:ribonucleoprotein complex"/>
    <property type="evidence" value="ECO:0007669"/>
    <property type="project" value="UniProtKB-KW"/>
</dbReference>
<dbReference type="GO" id="GO:0005840">
    <property type="term" value="C:ribosome"/>
    <property type="evidence" value="ECO:0007669"/>
    <property type="project" value="UniProtKB-KW"/>
</dbReference>
<dbReference type="GO" id="GO:0003735">
    <property type="term" value="F:structural constituent of ribosome"/>
    <property type="evidence" value="ECO:0007669"/>
    <property type="project" value="InterPro"/>
</dbReference>
<dbReference type="GO" id="GO:0006412">
    <property type="term" value="P:translation"/>
    <property type="evidence" value="ECO:0007669"/>
    <property type="project" value="UniProtKB-UniRule"/>
</dbReference>
<dbReference type="FunFam" id="1.10.287.3980:FF:000001">
    <property type="entry name" value="Mitochondrial ribosomal protein L34"/>
    <property type="match status" value="1"/>
</dbReference>
<dbReference type="Gene3D" id="1.10.287.3980">
    <property type="match status" value="1"/>
</dbReference>
<dbReference type="HAMAP" id="MF_00391">
    <property type="entry name" value="Ribosomal_bL34"/>
    <property type="match status" value="1"/>
</dbReference>
<dbReference type="InterPro" id="IPR000271">
    <property type="entry name" value="Ribosomal_bL34"/>
</dbReference>
<dbReference type="InterPro" id="IPR020939">
    <property type="entry name" value="Ribosomal_bL34_CS"/>
</dbReference>
<dbReference type="NCBIfam" id="TIGR01030">
    <property type="entry name" value="rpmH_bact"/>
    <property type="match status" value="1"/>
</dbReference>
<dbReference type="PANTHER" id="PTHR14503:SF4">
    <property type="entry name" value="LARGE RIBOSOMAL SUBUNIT PROTEIN BL34M"/>
    <property type="match status" value="1"/>
</dbReference>
<dbReference type="PANTHER" id="PTHR14503">
    <property type="entry name" value="MITOCHONDRIAL RIBOSOMAL PROTEIN 34 FAMILY MEMBER"/>
    <property type="match status" value="1"/>
</dbReference>
<dbReference type="Pfam" id="PF00468">
    <property type="entry name" value="Ribosomal_L34"/>
    <property type="match status" value="1"/>
</dbReference>
<dbReference type="PROSITE" id="PS00784">
    <property type="entry name" value="RIBOSOMAL_L34"/>
    <property type="match status" value="1"/>
</dbReference>
<protein>
    <recommendedName>
        <fullName evidence="1">Large ribosomal subunit protein bL34</fullName>
    </recommendedName>
    <alternativeName>
        <fullName evidence="2">50S ribosomal protein L34</fullName>
    </alternativeName>
</protein>
<sequence length="44" mass="5129">MKRTYQPSKIKRKRTHGFRARMATVGGCKVLARRRSKGRLQLTV</sequence>
<proteinExistence type="inferred from homology"/>
<comment type="similarity">
    <text evidence="1">Belongs to the bacterial ribosomal protein bL34 family.</text>
</comment>
<keyword id="KW-0687">Ribonucleoprotein</keyword>
<keyword id="KW-0689">Ribosomal protein</keyword>